<gene>
    <name evidence="1" type="primary">gpsA</name>
    <name type="ordered locus">LACR_1461</name>
</gene>
<comment type="function">
    <text evidence="1">Catalyzes the reduction of the glycolytic intermediate dihydroxyacetone phosphate (DHAP) to sn-glycerol 3-phosphate (G3P), the key precursor for phospholipid synthesis.</text>
</comment>
<comment type="catalytic activity">
    <reaction evidence="1">
        <text>sn-glycerol 3-phosphate + NAD(+) = dihydroxyacetone phosphate + NADH + H(+)</text>
        <dbReference type="Rhea" id="RHEA:11092"/>
        <dbReference type="ChEBI" id="CHEBI:15378"/>
        <dbReference type="ChEBI" id="CHEBI:57540"/>
        <dbReference type="ChEBI" id="CHEBI:57597"/>
        <dbReference type="ChEBI" id="CHEBI:57642"/>
        <dbReference type="ChEBI" id="CHEBI:57945"/>
        <dbReference type="EC" id="1.1.1.94"/>
    </reaction>
    <physiologicalReaction direction="right-to-left" evidence="1">
        <dbReference type="Rhea" id="RHEA:11094"/>
    </physiologicalReaction>
</comment>
<comment type="catalytic activity">
    <reaction evidence="1">
        <text>sn-glycerol 3-phosphate + NADP(+) = dihydroxyacetone phosphate + NADPH + H(+)</text>
        <dbReference type="Rhea" id="RHEA:11096"/>
        <dbReference type="ChEBI" id="CHEBI:15378"/>
        <dbReference type="ChEBI" id="CHEBI:57597"/>
        <dbReference type="ChEBI" id="CHEBI:57642"/>
        <dbReference type="ChEBI" id="CHEBI:57783"/>
        <dbReference type="ChEBI" id="CHEBI:58349"/>
        <dbReference type="EC" id="1.1.1.94"/>
    </reaction>
    <physiologicalReaction direction="right-to-left" evidence="1">
        <dbReference type="Rhea" id="RHEA:11098"/>
    </physiologicalReaction>
</comment>
<comment type="pathway">
    <text evidence="1">Membrane lipid metabolism; glycerophospholipid metabolism.</text>
</comment>
<comment type="subcellular location">
    <subcellularLocation>
        <location evidence="1">Cytoplasm</location>
    </subcellularLocation>
</comment>
<comment type="similarity">
    <text evidence="1">Belongs to the NAD-dependent glycerol-3-phosphate dehydrogenase family.</text>
</comment>
<name>GPDA_LACLS</name>
<sequence>MNPQKIAVLGPGSWGTGLSQVLNDNGHEVRIWGNNLEQMAEINEKHTNTRYFKDVVLDEKIKAYSRLDLALENVDAILFVVPTKVTRLVAKQVAQVLKHKVHILHASKGLEQGTHDRISTILEEEIPAQLRGEIVVVSGPSHAEETIVRDITLISAASNDHDEAKYAQSIFSNDYFRLYTNTDVIGVETAGALKNIIAVGAGALHGLGFGDNAKAAIITRGLAEITRLGVAMGAEPLTYSGLSGVGDLIVTGTSIHSRNWRAGDALGRGEKIADIEKNMGMVIEGVSTTKAAYELAQRLEIDMPITETIYKVLYENLDAKSGILDIMRRETRAENEFININK</sequence>
<keyword id="KW-0963">Cytoplasm</keyword>
<keyword id="KW-0444">Lipid biosynthesis</keyword>
<keyword id="KW-0443">Lipid metabolism</keyword>
<keyword id="KW-0520">NAD</keyword>
<keyword id="KW-0521">NADP</keyword>
<keyword id="KW-0547">Nucleotide-binding</keyword>
<keyword id="KW-0560">Oxidoreductase</keyword>
<keyword id="KW-0594">Phospholipid biosynthesis</keyword>
<keyword id="KW-1208">Phospholipid metabolism</keyword>
<reference key="1">
    <citation type="journal article" date="2006" name="Proc. Natl. Acad. Sci. U.S.A.">
        <title>Comparative genomics of the lactic acid bacteria.</title>
        <authorList>
            <person name="Makarova K.S."/>
            <person name="Slesarev A."/>
            <person name="Wolf Y.I."/>
            <person name="Sorokin A."/>
            <person name="Mirkin B."/>
            <person name="Koonin E.V."/>
            <person name="Pavlov A."/>
            <person name="Pavlova N."/>
            <person name="Karamychev V."/>
            <person name="Polouchine N."/>
            <person name="Shakhova V."/>
            <person name="Grigoriev I."/>
            <person name="Lou Y."/>
            <person name="Rohksar D."/>
            <person name="Lucas S."/>
            <person name="Huang K."/>
            <person name="Goodstein D.M."/>
            <person name="Hawkins T."/>
            <person name="Plengvidhya V."/>
            <person name="Welker D."/>
            <person name="Hughes J."/>
            <person name="Goh Y."/>
            <person name="Benson A."/>
            <person name="Baldwin K."/>
            <person name="Lee J.-H."/>
            <person name="Diaz-Muniz I."/>
            <person name="Dosti B."/>
            <person name="Smeianov V."/>
            <person name="Wechter W."/>
            <person name="Barabote R."/>
            <person name="Lorca G."/>
            <person name="Altermann E."/>
            <person name="Barrangou R."/>
            <person name="Ganesan B."/>
            <person name="Xie Y."/>
            <person name="Rawsthorne H."/>
            <person name="Tamir D."/>
            <person name="Parker C."/>
            <person name="Breidt F."/>
            <person name="Broadbent J.R."/>
            <person name="Hutkins R."/>
            <person name="O'Sullivan D."/>
            <person name="Steele J."/>
            <person name="Unlu G."/>
            <person name="Saier M.H. Jr."/>
            <person name="Klaenhammer T."/>
            <person name="Richardson P."/>
            <person name="Kozyavkin S."/>
            <person name="Weimer B.C."/>
            <person name="Mills D.A."/>
        </authorList>
    </citation>
    <scope>NUCLEOTIDE SEQUENCE [LARGE SCALE GENOMIC DNA]</scope>
    <source>
        <strain>SK11</strain>
    </source>
</reference>
<evidence type="ECO:0000255" key="1">
    <source>
        <dbReference type="HAMAP-Rule" id="MF_00394"/>
    </source>
</evidence>
<feature type="chain" id="PRO_1000049519" description="Glycerol-3-phosphate dehydrogenase [NAD(P)+]">
    <location>
        <begin position="1"/>
        <end position="342"/>
    </location>
</feature>
<feature type="active site" description="Proton acceptor" evidence="1">
    <location>
        <position position="194"/>
    </location>
</feature>
<feature type="binding site" evidence="1">
    <location>
        <position position="13"/>
    </location>
    <ligand>
        <name>NADPH</name>
        <dbReference type="ChEBI" id="CHEBI:57783"/>
    </ligand>
</feature>
<feature type="binding site" evidence="1">
    <location>
        <position position="14"/>
    </location>
    <ligand>
        <name>NADPH</name>
        <dbReference type="ChEBI" id="CHEBI:57783"/>
    </ligand>
</feature>
<feature type="binding site" evidence="1">
    <location>
        <position position="108"/>
    </location>
    <ligand>
        <name>NADPH</name>
        <dbReference type="ChEBI" id="CHEBI:57783"/>
    </ligand>
</feature>
<feature type="binding site" evidence="1">
    <location>
        <position position="108"/>
    </location>
    <ligand>
        <name>sn-glycerol 3-phosphate</name>
        <dbReference type="ChEBI" id="CHEBI:57597"/>
    </ligand>
</feature>
<feature type="binding site" evidence="1">
    <location>
        <position position="139"/>
    </location>
    <ligand>
        <name>sn-glycerol 3-phosphate</name>
        <dbReference type="ChEBI" id="CHEBI:57597"/>
    </ligand>
</feature>
<feature type="binding site" evidence="1">
    <location>
        <position position="141"/>
    </location>
    <ligand>
        <name>sn-glycerol 3-phosphate</name>
        <dbReference type="ChEBI" id="CHEBI:57597"/>
    </ligand>
</feature>
<feature type="binding site" evidence="1">
    <location>
        <position position="143"/>
    </location>
    <ligand>
        <name>NADPH</name>
        <dbReference type="ChEBI" id="CHEBI:57783"/>
    </ligand>
</feature>
<feature type="binding site" evidence="1">
    <location>
        <position position="194"/>
    </location>
    <ligand>
        <name>sn-glycerol 3-phosphate</name>
        <dbReference type="ChEBI" id="CHEBI:57597"/>
    </ligand>
</feature>
<feature type="binding site" evidence="1">
    <location>
        <position position="247"/>
    </location>
    <ligand>
        <name>sn-glycerol 3-phosphate</name>
        <dbReference type="ChEBI" id="CHEBI:57597"/>
    </ligand>
</feature>
<feature type="binding site" evidence="1">
    <location>
        <position position="257"/>
    </location>
    <ligand>
        <name>sn-glycerol 3-phosphate</name>
        <dbReference type="ChEBI" id="CHEBI:57597"/>
    </ligand>
</feature>
<feature type="binding site" evidence="1">
    <location>
        <position position="258"/>
    </location>
    <ligand>
        <name>NADPH</name>
        <dbReference type="ChEBI" id="CHEBI:57783"/>
    </ligand>
</feature>
<feature type="binding site" evidence="1">
    <location>
        <position position="258"/>
    </location>
    <ligand>
        <name>sn-glycerol 3-phosphate</name>
        <dbReference type="ChEBI" id="CHEBI:57597"/>
    </ligand>
</feature>
<feature type="binding site" evidence="1">
    <location>
        <position position="259"/>
    </location>
    <ligand>
        <name>sn-glycerol 3-phosphate</name>
        <dbReference type="ChEBI" id="CHEBI:57597"/>
    </ligand>
</feature>
<feature type="binding site" evidence="1">
    <location>
        <position position="282"/>
    </location>
    <ligand>
        <name>NADPH</name>
        <dbReference type="ChEBI" id="CHEBI:57783"/>
    </ligand>
</feature>
<feature type="binding site" evidence="1">
    <location>
        <position position="284"/>
    </location>
    <ligand>
        <name>NADPH</name>
        <dbReference type="ChEBI" id="CHEBI:57783"/>
    </ligand>
</feature>
<proteinExistence type="inferred from homology"/>
<accession>Q02YK1</accession>
<organism>
    <name type="scientific">Lactococcus lactis subsp. cremoris (strain SK11)</name>
    <dbReference type="NCBI Taxonomy" id="272622"/>
    <lineage>
        <taxon>Bacteria</taxon>
        <taxon>Bacillati</taxon>
        <taxon>Bacillota</taxon>
        <taxon>Bacilli</taxon>
        <taxon>Lactobacillales</taxon>
        <taxon>Streptococcaceae</taxon>
        <taxon>Lactococcus</taxon>
        <taxon>Lactococcus cremoris subsp. cremoris</taxon>
    </lineage>
</organism>
<protein>
    <recommendedName>
        <fullName evidence="1">Glycerol-3-phosphate dehydrogenase [NAD(P)+]</fullName>
        <ecNumber evidence="1">1.1.1.94</ecNumber>
    </recommendedName>
    <alternativeName>
        <fullName evidence="1">NAD(P)(+)-dependent glycerol-3-phosphate dehydrogenase</fullName>
    </alternativeName>
    <alternativeName>
        <fullName evidence="1">NAD(P)H-dependent dihydroxyacetone-phosphate reductase</fullName>
    </alternativeName>
</protein>
<dbReference type="EC" id="1.1.1.94" evidence="1"/>
<dbReference type="EMBL" id="CP000425">
    <property type="protein sequence ID" value="ABJ72971.1"/>
    <property type="molecule type" value="Genomic_DNA"/>
</dbReference>
<dbReference type="RefSeq" id="WP_011676332.1">
    <property type="nucleotide sequence ID" value="NC_008527.1"/>
</dbReference>
<dbReference type="SMR" id="Q02YK1"/>
<dbReference type="KEGG" id="llc:LACR_1461"/>
<dbReference type="HOGENOM" id="CLU_033449_0_2_9"/>
<dbReference type="UniPathway" id="UPA00940"/>
<dbReference type="Proteomes" id="UP000000240">
    <property type="component" value="Chromosome"/>
</dbReference>
<dbReference type="GO" id="GO:0005829">
    <property type="term" value="C:cytosol"/>
    <property type="evidence" value="ECO:0007669"/>
    <property type="project" value="TreeGrafter"/>
</dbReference>
<dbReference type="GO" id="GO:0047952">
    <property type="term" value="F:glycerol-3-phosphate dehydrogenase [NAD(P)+] activity"/>
    <property type="evidence" value="ECO:0007669"/>
    <property type="project" value="UniProtKB-UniRule"/>
</dbReference>
<dbReference type="GO" id="GO:0051287">
    <property type="term" value="F:NAD binding"/>
    <property type="evidence" value="ECO:0007669"/>
    <property type="project" value="InterPro"/>
</dbReference>
<dbReference type="GO" id="GO:0005975">
    <property type="term" value="P:carbohydrate metabolic process"/>
    <property type="evidence" value="ECO:0007669"/>
    <property type="project" value="InterPro"/>
</dbReference>
<dbReference type="GO" id="GO:0046167">
    <property type="term" value="P:glycerol-3-phosphate biosynthetic process"/>
    <property type="evidence" value="ECO:0007669"/>
    <property type="project" value="UniProtKB-UniRule"/>
</dbReference>
<dbReference type="GO" id="GO:0046168">
    <property type="term" value="P:glycerol-3-phosphate catabolic process"/>
    <property type="evidence" value="ECO:0007669"/>
    <property type="project" value="InterPro"/>
</dbReference>
<dbReference type="GO" id="GO:0006650">
    <property type="term" value="P:glycerophospholipid metabolic process"/>
    <property type="evidence" value="ECO:0007669"/>
    <property type="project" value="UniProtKB-UniRule"/>
</dbReference>
<dbReference type="GO" id="GO:0008654">
    <property type="term" value="P:phospholipid biosynthetic process"/>
    <property type="evidence" value="ECO:0007669"/>
    <property type="project" value="UniProtKB-KW"/>
</dbReference>
<dbReference type="FunFam" id="1.10.1040.10:FF:000001">
    <property type="entry name" value="Glycerol-3-phosphate dehydrogenase [NAD(P)+]"/>
    <property type="match status" value="1"/>
</dbReference>
<dbReference type="FunFam" id="3.40.50.720:FF:000019">
    <property type="entry name" value="Glycerol-3-phosphate dehydrogenase [NAD(P)+]"/>
    <property type="match status" value="1"/>
</dbReference>
<dbReference type="Gene3D" id="1.10.1040.10">
    <property type="entry name" value="N-(1-d-carboxylethyl)-l-norvaline Dehydrogenase, domain 2"/>
    <property type="match status" value="1"/>
</dbReference>
<dbReference type="Gene3D" id="3.40.50.720">
    <property type="entry name" value="NAD(P)-binding Rossmann-like Domain"/>
    <property type="match status" value="1"/>
</dbReference>
<dbReference type="HAMAP" id="MF_00394">
    <property type="entry name" value="NAD_Glyc3P_dehydrog"/>
    <property type="match status" value="1"/>
</dbReference>
<dbReference type="InterPro" id="IPR008927">
    <property type="entry name" value="6-PGluconate_DH-like_C_sf"/>
</dbReference>
<dbReference type="InterPro" id="IPR013328">
    <property type="entry name" value="6PGD_dom2"/>
</dbReference>
<dbReference type="InterPro" id="IPR006168">
    <property type="entry name" value="G3P_DH_NAD-dep"/>
</dbReference>
<dbReference type="InterPro" id="IPR006109">
    <property type="entry name" value="G3P_DH_NAD-dep_C"/>
</dbReference>
<dbReference type="InterPro" id="IPR011128">
    <property type="entry name" value="G3P_DH_NAD-dep_N"/>
</dbReference>
<dbReference type="InterPro" id="IPR036291">
    <property type="entry name" value="NAD(P)-bd_dom_sf"/>
</dbReference>
<dbReference type="NCBIfam" id="NF000940">
    <property type="entry name" value="PRK00094.1-2"/>
    <property type="match status" value="1"/>
</dbReference>
<dbReference type="NCBIfam" id="NF000941">
    <property type="entry name" value="PRK00094.1-3"/>
    <property type="match status" value="1"/>
</dbReference>
<dbReference type="NCBIfam" id="NF000942">
    <property type="entry name" value="PRK00094.1-4"/>
    <property type="match status" value="1"/>
</dbReference>
<dbReference type="PANTHER" id="PTHR11728">
    <property type="entry name" value="GLYCEROL-3-PHOSPHATE DEHYDROGENASE"/>
    <property type="match status" value="1"/>
</dbReference>
<dbReference type="PANTHER" id="PTHR11728:SF1">
    <property type="entry name" value="GLYCEROL-3-PHOSPHATE DEHYDROGENASE [NAD(+)] 2, CHLOROPLASTIC"/>
    <property type="match status" value="1"/>
</dbReference>
<dbReference type="Pfam" id="PF07479">
    <property type="entry name" value="NAD_Gly3P_dh_C"/>
    <property type="match status" value="1"/>
</dbReference>
<dbReference type="Pfam" id="PF01210">
    <property type="entry name" value="NAD_Gly3P_dh_N"/>
    <property type="match status" value="1"/>
</dbReference>
<dbReference type="PIRSF" id="PIRSF000114">
    <property type="entry name" value="Glycerol-3-P_dh"/>
    <property type="match status" value="1"/>
</dbReference>
<dbReference type="PRINTS" id="PR00077">
    <property type="entry name" value="GPDHDRGNASE"/>
</dbReference>
<dbReference type="SUPFAM" id="SSF48179">
    <property type="entry name" value="6-phosphogluconate dehydrogenase C-terminal domain-like"/>
    <property type="match status" value="1"/>
</dbReference>
<dbReference type="SUPFAM" id="SSF51735">
    <property type="entry name" value="NAD(P)-binding Rossmann-fold domains"/>
    <property type="match status" value="1"/>
</dbReference>
<dbReference type="PROSITE" id="PS00957">
    <property type="entry name" value="NAD_G3PDH"/>
    <property type="match status" value="1"/>
</dbReference>